<feature type="signal peptide" evidence="1">
    <location>
        <begin position="1"/>
        <end position="22"/>
    </location>
</feature>
<feature type="chain" id="PRO_0000020223" description="Glucans biosynthesis protein G">
    <location>
        <begin position="23"/>
        <end position="511"/>
    </location>
</feature>
<organism>
    <name type="scientific">Escherichia coli O157:H7</name>
    <dbReference type="NCBI Taxonomy" id="83334"/>
    <lineage>
        <taxon>Bacteria</taxon>
        <taxon>Pseudomonadati</taxon>
        <taxon>Pseudomonadota</taxon>
        <taxon>Gammaproteobacteria</taxon>
        <taxon>Enterobacterales</taxon>
        <taxon>Enterobacteriaceae</taxon>
        <taxon>Escherichia</taxon>
    </lineage>
</organism>
<accession>P67556</accession>
<accession>Q8CW60</accession>
<accession>Q8X9I5</accession>
<protein>
    <recommendedName>
        <fullName>Glucans biosynthesis protein G</fullName>
    </recommendedName>
</protein>
<evidence type="ECO:0000250" key="1"/>
<evidence type="ECO:0000305" key="2"/>
<proteinExistence type="inferred from homology"/>
<keyword id="KW-0574">Periplasm</keyword>
<keyword id="KW-1185">Reference proteome</keyword>
<keyword id="KW-0732">Signal</keyword>
<dbReference type="EMBL" id="AE005174">
    <property type="protein sequence ID" value="AAG55794.1"/>
    <property type="molecule type" value="Genomic_DNA"/>
</dbReference>
<dbReference type="EMBL" id="BA000007">
    <property type="protein sequence ID" value="BAB34849.2"/>
    <property type="status" value="ALT_INIT"/>
    <property type="molecule type" value="Genomic_DNA"/>
</dbReference>
<dbReference type="PIR" id="B90807">
    <property type="entry name" value="B90807"/>
</dbReference>
<dbReference type="PIR" id="F85666">
    <property type="entry name" value="F85666"/>
</dbReference>
<dbReference type="RefSeq" id="NP_309453.1">
    <property type="nucleotide sequence ID" value="NC_002695.1"/>
</dbReference>
<dbReference type="RefSeq" id="WP_001300662.1">
    <property type="nucleotide sequence ID" value="NZ_VOAI01000018.1"/>
</dbReference>
<dbReference type="SMR" id="P67556"/>
<dbReference type="STRING" id="155864.Z1683"/>
<dbReference type="GeneID" id="912482"/>
<dbReference type="GeneID" id="93776366"/>
<dbReference type="KEGG" id="ece:Z1683"/>
<dbReference type="KEGG" id="ecs:ECs_1426"/>
<dbReference type="PATRIC" id="fig|386585.9.peg.1528"/>
<dbReference type="eggNOG" id="COG3131">
    <property type="taxonomic scope" value="Bacteria"/>
</dbReference>
<dbReference type="HOGENOM" id="CLU_023403_2_0_6"/>
<dbReference type="OMA" id="AYRFVIM"/>
<dbReference type="UniPathway" id="UPA00637"/>
<dbReference type="Proteomes" id="UP000000558">
    <property type="component" value="Chromosome"/>
</dbReference>
<dbReference type="Proteomes" id="UP000002519">
    <property type="component" value="Chromosome"/>
</dbReference>
<dbReference type="GO" id="GO:0030288">
    <property type="term" value="C:outer membrane-bounded periplasmic space"/>
    <property type="evidence" value="ECO:0007669"/>
    <property type="project" value="TreeGrafter"/>
</dbReference>
<dbReference type="GO" id="GO:0030246">
    <property type="term" value="F:carbohydrate binding"/>
    <property type="evidence" value="ECO:0007669"/>
    <property type="project" value="InterPro"/>
</dbReference>
<dbReference type="GO" id="GO:0003824">
    <property type="term" value="F:catalytic activity"/>
    <property type="evidence" value="ECO:0007669"/>
    <property type="project" value="InterPro"/>
</dbReference>
<dbReference type="GO" id="GO:0051274">
    <property type="term" value="P:beta-glucan biosynthetic process"/>
    <property type="evidence" value="ECO:0007669"/>
    <property type="project" value="TreeGrafter"/>
</dbReference>
<dbReference type="FunFam" id="2.60.40.10:FF:000294">
    <property type="entry name" value="Glucans biosynthesis protein G"/>
    <property type="match status" value="1"/>
</dbReference>
<dbReference type="FunFam" id="2.70.98.10:FF:000001">
    <property type="entry name" value="Glucans biosynthesis protein G"/>
    <property type="match status" value="1"/>
</dbReference>
<dbReference type="Gene3D" id="2.70.98.10">
    <property type="match status" value="1"/>
</dbReference>
<dbReference type="Gene3D" id="2.60.40.10">
    <property type="entry name" value="Immunoglobulins"/>
    <property type="match status" value="1"/>
</dbReference>
<dbReference type="HAMAP" id="MF_01069">
    <property type="entry name" value="MdoG_OpgG"/>
    <property type="match status" value="1"/>
</dbReference>
<dbReference type="InterPro" id="IPR011013">
    <property type="entry name" value="Gal_mutarotase_sf_dom"/>
</dbReference>
<dbReference type="InterPro" id="IPR014718">
    <property type="entry name" value="GH-type_carb-bd"/>
</dbReference>
<dbReference type="InterPro" id="IPR014438">
    <property type="entry name" value="Glucan_biosyn_MdoG/MdoD"/>
</dbReference>
<dbReference type="InterPro" id="IPR007444">
    <property type="entry name" value="Glucan_biosyn_MdoG_C"/>
</dbReference>
<dbReference type="InterPro" id="IPR013783">
    <property type="entry name" value="Ig-like_fold"/>
</dbReference>
<dbReference type="InterPro" id="IPR014756">
    <property type="entry name" value="Ig_E-set"/>
</dbReference>
<dbReference type="InterPro" id="IPR023704">
    <property type="entry name" value="MdoG_OpgG"/>
</dbReference>
<dbReference type="PANTHER" id="PTHR30504">
    <property type="entry name" value="GLUCANS BIOSYNTHESIS PROTEIN"/>
    <property type="match status" value="1"/>
</dbReference>
<dbReference type="PANTHER" id="PTHR30504:SF4">
    <property type="entry name" value="GLUCANS BIOSYNTHESIS PROTEIN G"/>
    <property type="match status" value="1"/>
</dbReference>
<dbReference type="Pfam" id="PF04349">
    <property type="entry name" value="MdoG"/>
    <property type="match status" value="1"/>
</dbReference>
<dbReference type="PIRSF" id="PIRSF006281">
    <property type="entry name" value="MdoG"/>
    <property type="match status" value="1"/>
</dbReference>
<dbReference type="SUPFAM" id="SSF81296">
    <property type="entry name" value="E set domains"/>
    <property type="match status" value="1"/>
</dbReference>
<dbReference type="SUPFAM" id="SSF74650">
    <property type="entry name" value="Galactose mutarotase-like"/>
    <property type="match status" value="1"/>
</dbReference>
<sequence>MMKMRWLSAAVMLTLYTSSSWAFSIDDVAKQAQSLAGKGYEAPKSNLPSVFRDMKYADYQQIQFNHDKAYWNNLKTPFKLEFYHQGMYFDTPVKINEVTATAVKRIKYSPDYFTFGDVQHDKDTVKDLGFAGFKVLYPINSKDKNDEIVSMLGASYFRVIGAGQVYGLSARGLAIDTALPSGEEFPRFKEFWIERPKPTDKRLTIYALLDSPRATGAYKFVVMPGRDTVVDVQSKIYLRDKVGKLGVAPLTSMFLFGPNQPSPANNYRPELHDSNGLSIHAGNGEWIWRPLNNPKHLAVSSFSMENPQGFGLLQRGRDFSRFEDLDDRYDLRPSAWVTPKGEWGKGSVELVEIPTNDETNDNIVAYWTPDQLPEPGKEMNFKYTITFSRDEDKLHAPDNAWVQQTRRSTGDVKQSNLIRQPDGTIAFVVDFTGAEMKKLPEDTPVTAQTSIGDNGEIVESTVRYNPVTKGWRLVMRVKVKDAKKTTEMRAALVNADQTLSETWSYQLPANE</sequence>
<comment type="function">
    <text evidence="1">Involved in the biosynthesis of osmoregulated periplasmic glucans (OPGs).</text>
</comment>
<comment type="pathway">
    <text>Glycan metabolism; osmoregulated periplasmic glucan (OPG) biosynthesis.</text>
</comment>
<comment type="subcellular location">
    <subcellularLocation>
        <location evidence="1">Periplasm</location>
    </subcellularLocation>
</comment>
<comment type="similarity">
    <text evidence="2">Belongs to the OpgD/OpgG family.</text>
</comment>
<comment type="sequence caution" evidence="2">
    <conflict type="erroneous initiation">
        <sequence resource="EMBL-CDS" id="BAB34849"/>
    </conflict>
    <text>Truncated N-terminus.</text>
</comment>
<gene>
    <name type="primary">mdoG</name>
    <name type="synonym">opgG</name>
    <name type="ordered locus">Z1683</name>
    <name type="ordered locus">ECs1426</name>
</gene>
<name>OPGG_ECO57</name>
<reference key="1">
    <citation type="journal article" date="2001" name="Nature">
        <title>Genome sequence of enterohaemorrhagic Escherichia coli O157:H7.</title>
        <authorList>
            <person name="Perna N.T."/>
            <person name="Plunkett G. III"/>
            <person name="Burland V."/>
            <person name="Mau B."/>
            <person name="Glasner J.D."/>
            <person name="Rose D.J."/>
            <person name="Mayhew G.F."/>
            <person name="Evans P.S."/>
            <person name="Gregor J."/>
            <person name="Kirkpatrick H.A."/>
            <person name="Posfai G."/>
            <person name="Hackett J."/>
            <person name="Klink S."/>
            <person name="Boutin A."/>
            <person name="Shao Y."/>
            <person name="Miller L."/>
            <person name="Grotbeck E.J."/>
            <person name="Davis N.W."/>
            <person name="Lim A."/>
            <person name="Dimalanta E.T."/>
            <person name="Potamousis K."/>
            <person name="Apodaca J."/>
            <person name="Anantharaman T.S."/>
            <person name="Lin J."/>
            <person name="Yen G."/>
            <person name="Schwartz D.C."/>
            <person name="Welch R.A."/>
            <person name="Blattner F.R."/>
        </authorList>
    </citation>
    <scope>NUCLEOTIDE SEQUENCE [LARGE SCALE GENOMIC DNA]</scope>
    <source>
        <strain>O157:H7 / EDL933 / ATCC 700927 / EHEC</strain>
    </source>
</reference>
<reference key="2">
    <citation type="journal article" date="2001" name="DNA Res.">
        <title>Complete genome sequence of enterohemorrhagic Escherichia coli O157:H7 and genomic comparison with a laboratory strain K-12.</title>
        <authorList>
            <person name="Hayashi T."/>
            <person name="Makino K."/>
            <person name="Ohnishi M."/>
            <person name="Kurokawa K."/>
            <person name="Ishii K."/>
            <person name="Yokoyama K."/>
            <person name="Han C.-G."/>
            <person name="Ohtsubo E."/>
            <person name="Nakayama K."/>
            <person name="Murata T."/>
            <person name="Tanaka M."/>
            <person name="Tobe T."/>
            <person name="Iida T."/>
            <person name="Takami H."/>
            <person name="Honda T."/>
            <person name="Sasakawa C."/>
            <person name="Ogasawara N."/>
            <person name="Yasunaga T."/>
            <person name="Kuhara S."/>
            <person name="Shiba T."/>
            <person name="Hattori M."/>
            <person name="Shinagawa H."/>
        </authorList>
    </citation>
    <scope>NUCLEOTIDE SEQUENCE [LARGE SCALE GENOMIC DNA]</scope>
    <source>
        <strain>O157:H7 / Sakai / RIMD 0509952 / EHEC</strain>
    </source>
</reference>